<sequence>MADFDNLFDAAIARADETIRGYMGTSATITSGEQSGAVIRGVFDDPENISYAGQGVRVEGSSPSLFVRTDEVRQLRRGDTLTIGEENFWVDRVSPDDGGSCHLWLGRGVPPAVNRRR</sequence>
<organismHost>
    <name type="scientific">Escherichia coli</name>
    <dbReference type="NCBI Taxonomy" id="562"/>
</organismHost>
<organism>
    <name type="scientific">Escherichia phage lambda</name>
    <name type="common">Bacteriophage lambda</name>
    <dbReference type="NCBI Taxonomy" id="2681611"/>
    <lineage>
        <taxon>Viruses</taxon>
        <taxon>Duplodnaviria</taxon>
        <taxon>Heunggongvirae</taxon>
        <taxon>Uroviricota</taxon>
        <taxon>Caudoviricetes</taxon>
        <taxon>Lambdavirus</taxon>
        <taxon>Lambdavirus lambda</taxon>
    </lineage>
</organism>
<feature type="chain" id="PRO_0000077599" description="Head-tail connector protein FII">
    <location>
        <begin position="1"/>
        <end position="117"/>
    </location>
</feature>
<feature type="helix" evidence="8">
    <location>
        <begin position="7"/>
        <end position="22"/>
    </location>
</feature>
<feature type="strand" evidence="8">
    <location>
        <begin position="25"/>
        <end position="36"/>
    </location>
</feature>
<feature type="strand" evidence="8">
    <location>
        <begin position="38"/>
        <end position="44"/>
    </location>
</feature>
<feature type="strand" evidence="8">
    <location>
        <begin position="47"/>
        <end position="51"/>
    </location>
</feature>
<feature type="strand" evidence="8">
    <location>
        <begin position="53"/>
        <end position="55"/>
    </location>
</feature>
<feature type="strand" evidence="8">
    <location>
        <begin position="57"/>
        <end position="61"/>
    </location>
</feature>
<feature type="strand" evidence="8">
    <location>
        <begin position="64"/>
        <end position="68"/>
    </location>
</feature>
<feature type="turn" evidence="8">
    <location>
        <begin position="69"/>
        <end position="74"/>
    </location>
</feature>
<feature type="strand" evidence="8">
    <location>
        <begin position="80"/>
        <end position="93"/>
    </location>
</feature>
<feature type="strand" evidence="7">
    <location>
        <begin position="95"/>
        <end position="97"/>
    </location>
</feature>
<feature type="strand" evidence="8">
    <location>
        <begin position="100"/>
        <end position="108"/>
    </location>
</feature>
<dbReference type="EMBL" id="J02459">
    <property type="protein sequence ID" value="AAA96542.1"/>
    <property type="molecule type" value="Genomic_DNA"/>
</dbReference>
<dbReference type="PIR" id="I94614">
    <property type="entry name" value="VHBPFL"/>
</dbReference>
<dbReference type="RefSeq" id="NP_040589.1">
    <property type="nucleotide sequence ID" value="NC_001416.1"/>
</dbReference>
<dbReference type="PDB" id="1K0H">
    <property type="method" value="NMR"/>
    <property type="chains" value="A=1-117"/>
</dbReference>
<dbReference type="PDB" id="2KX4">
    <property type="method" value="NMR"/>
    <property type="chains" value="A=1-117"/>
</dbReference>
<dbReference type="PDB" id="8K37">
    <property type="method" value="EM"/>
    <property type="resolution" value="3.50 A"/>
    <property type="chains" value="M/N/O/P/Q/R=1-117"/>
</dbReference>
<dbReference type="PDB" id="8XOW">
    <property type="method" value="EM"/>
    <property type="resolution" value="3.32 A"/>
    <property type="chains" value="f/f1/f2/f3/f4/f5=1-117"/>
</dbReference>
<dbReference type="PDB" id="8XPM">
    <property type="method" value="EM"/>
    <property type="resolution" value="3.90 A"/>
    <property type="chains" value="f/f1/f2/f3/f4/f5=1-117"/>
</dbReference>
<dbReference type="PDB" id="8XQB">
    <property type="method" value="EM"/>
    <property type="resolution" value="4.07 A"/>
    <property type="chains" value="f/f1/f2/f3/f4/f5=1-117"/>
</dbReference>
<dbReference type="PDBsum" id="1K0H"/>
<dbReference type="PDBsum" id="2KX4"/>
<dbReference type="PDBsum" id="8K37"/>
<dbReference type="PDBsum" id="8XOW"/>
<dbReference type="PDBsum" id="8XPM"/>
<dbReference type="PDBsum" id="8XQB"/>
<dbReference type="EMDB" id="EMD-36846"/>
<dbReference type="EMDB" id="EMD-38542"/>
<dbReference type="EMDB" id="EMD-38556"/>
<dbReference type="EMDB" id="EMD-38572"/>
<dbReference type="SMR" id="P03714"/>
<dbReference type="GeneID" id="2703484"/>
<dbReference type="KEGG" id="vg:2703484"/>
<dbReference type="EvolutionaryTrace" id="P03714"/>
<dbReference type="Proteomes" id="UP000001711">
    <property type="component" value="Genome"/>
</dbReference>
<dbReference type="GO" id="GO:0030430">
    <property type="term" value="C:host cell cytoplasm"/>
    <property type="evidence" value="ECO:0007669"/>
    <property type="project" value="UniProtKB-SubCell"/>
</dbReference>
<dbReference type="GO" id="GO:0044423">
    <property type="term" value="C:virion component"/>
    <property type="evidence" value="ECO:0007669"/>
    <property type="project" value="UniProtKB-KW"/>
</dbReference>
<dbReference type="GO" id="GO:0019068">
    <property type="term" value="P:virion assembly"/>
    <property type="evidence" value="ECO:0000314"/>
    <property type="project" value="DisProt"/>
</dbReference>
<dbReference type="DisProt" id="DP01762"/>
<dbReference type="Gene3D" id="2.40.10.180">
    <property type="entry name" value="Phage tail proteins"/>
    <property type="match status" value="1"/>
</dbReference>
<dbReference type="InterPro" id="IPR053734">
    <property type="entry name" value="Phage_Head-Tail_Connect_sf"/>
</dbReference>
<dbReference type="InterPro" id="IPR008018">
    <property type="entry name" value="Phage_tail_attach_FII"/>
</dbReference>
<dbReference type="Pfam" id="PF05354">
    <property type="entry name" value="Phage_attach"/>
    <property type="match status" value="1"/>
</dbReference>
<dbReference type="SUPFAM" id="SSF69279">
    <property type="entry name" value="Phage tail proteins"/>
    <property type="match status" value="1"/>
</dbReference>
<accession>P03714</accession>
<comment type="function">
    <text evidence="1 2 3">Plays a role in virion assembly by joining the head and the tail at the last step of morphogenesis. Six FII proteins probably bind protein W that closes the DNA-filled capsid, as well as the U tail terminator protein of the pre-assembled tail.</text>
</comment>
<comment type="subunit">
    <text evidence="3">May bind head-to-tail joining protein W and protein U.</text>
</comment>
<comment type="subcellular location">
    <subcellularLocation>
        <location evidence="3">Virion</location>
    </subcellularLocation>
    <subcellularLocation>
        <location evidence="3">Host cytoplasm</location>
    </subcellularLocation>
</comment>
<comment type="caution">
    <text evidence="6">It is uncertain whether Met-1 or Met-23 is the initiator.</text>
</comment>
<evidence type="ECO:0000269" key="1">
    <source>
    </source>
</evidence>
<evidence type="ECO:0000269" key="2">
    <source>
    </source>
</evidence>
<evidence type="ECO:0000269" key="3">
    <source>
    </source>
</evidence>
<evidence type="ECO:0000303" key="4">
    <source>
    </source>
</evidence>
<evidence type="ECO:0000303" key="5">
    <source>
    </source>
</evidence>
<evidence type="ECO:0000305" key="6"/>
<evidence type="ECO:0007829" key="7">
    <source>
        <dbReference type="PDB" id="1K0H"/>
    </source>
</evidence>
<evidence type="ECO:0007829" key="8">
    <source>
        <dbReference type="PDB" id="8K37"/>
    </source>
</evidence>
<reference key="1">
    <citation type="journal article" date="1982" name="J. Mol. Biol.">
        <title>Nucleotide sequence of bacteriophage lambda DNA.</title>
        <authorList>
            <person name="Sanger F."/>
            <person name="Coulson A.R."/>
            <person name="Hong G.F."/>
            <person name="Hill D.F."/>
            <person name="Petersen G.B."/>
        </authorList>
    </citation>
    <scope>NUCLEOTIDE SEQUENCE [LARGE SCALE GENOMIC DNA]</scope>
</reference>
<reference key="2">
    <citation type="journal article" date="1972" name="J. Mol. Biol.">
        <title>Head assembly steps controlled by genes F and W in bacteriophage lambda.</title>
        <authorList>
            <person name="Casjens S."/>
            <person name="Horn T."/>
            <person name="Kaiser A.D."/>
        </authorList>
    </citation>
    <scope>FUNCTION</scope>
    <scope>SUBCELLULAR LOCATION</scope>
    <scope>SUBUNIT</scope>
</reference>
<reference key="3">
    <citation type="journal article" date="1974" name="Virology">
        <title>Functional abnormality of lambda phage particles from complemented FII-mutant lysates.</title>
        <authorList>
            <person name="Boklage C.E."/>
            <person name="Wong E.C."/>
            <person name="Bode V.C."/>
        </authorList>
    </citation>
    <scope>FUNCTION</scope>
</reference>
<reference key="4">
    <citation type="journal article" date="1974" name="J. Mol. Biol.">
        <title>Bacteriophage lambda FII gene protein: role in head assembly.</title>
        <authorList>
            <person name="Casjens S."/>
        </authorList>
    </citation>
    <scope>FUNCTION</scope>
</reference>
<reference key="5">
    <citation type="journal article" date="2002" name="J. Mol. Biol.">
        <title>The solution structure of the bacteriophage lambda head-tail joining protein, gpFII.</title>
        <authorList>
            <person name="Maxwell K.L."/>
            <person name="Yee A.A."/>
            <person name="Arrowsmith C.H."/>
            <person name="Gold M."/>
            <person name="Davidson A.R."/>
        </authorList>
    </citation>
    <scope>STRUCTURE BY NMR</scope>
</reference>
<reference key="6">
    <citation type="journal article" date="2010" name="Proc. Natl. Acad. Sci. U.S.A.">
        <title>Phages have adapted the same protein fold to fulfill multiple functions in virion assembly.</title>
        <authorList>
            <person name="Cardarelli L."/>
            <person name="Pell L.G."/>
            <person name="Neudecker P."/>
            <person name="Pirani N."/>
            <person name="Liu A."/>
            <person name="Baker L.A."/>
            <person name="Rubinstein J.L."/>
            <person name="Maxwell K.L."/>
            <person name="Davidson A.R."/>
        </authorList>
    </citation>
    <scope>STRUCTURE BY NMR</scope>
</reference>
<keyword id="KW-0002">3D-structure</keyword>
<keyword id="KW-1035">Host cytoplasm</keyword>
<keyword id="KW-0426">Late protein</keyword>
<keyword id="KW-1185">Reference proteome</keyword>
<keyword id="KW-0118">Viral capsid assembly</keyword>
<keyword id="KW-1188">Viral release from host cell</keyword>
<keyword id="KW-0946">Virion</keyword>
<proteinExistence type="evidence at protein level"/>
<gene>
    <name type="primary">FII</name>
    <name type="ordered locus">lambdap10</name>
</gene>
<protein>
    <recommendedName>
        <fullName evidence="5">Head-tail connector protein FII</fullName>
    </recommendedName>
    <alternativeName>
        <fullName evidence="4">Head-tail joining protein</fullName>
    </alternativeName>
    <alternativeName>
        <fullName>Minor capsid protein FII</fullName>
    </alternativeName>
</protein>
<name>FII_LAMBD</name>